<accession>P82537</accession>
<reference key="1">
    <citation type="submission" date="2000-05" db="UniProtKB">
        <authorList>
            <person name="Kieselbach T."/>
            <person name="Bystedt M."/>
            <person name="Schroeder W.P."/>
        </authorList>
    </citation>
    <scope>PROTEIN SEQUENCE</scope>
</reference>
<name>TL1X_SPIOL</name>
<proteinExistence type="evidence at protein level"/>
<organism>
    <name type="scientific">Spinacia oleracea</name>
    <name type="common">Spinach</name>
    <dbReference type="NCBI Taxonomy" id="3562"/>
    <lineage>
        <taxon>Eukaryota</taxon>
        <taxon>Viridiplantae</taxon>
        <taxon>Streptophyta</taxon>
        <taxon>Embryophyta</taxon>
        <taxon>Tracheophyta</taxon>
        <taxon>Spermatophyta</taxon>
        <taxon>Magnoliopsida</taxon>
        <taxon>eudicotyledons</taxon>
        <taxon>Gunneridae</taxon>
        <taxon>Pentapetalae</taxon>
        <taxon>Caryophyllales</taxon>
        <taxon>Chenopodiaceae</taxon>
        <taxon>Chenopodioideae</taxon>
        <taxon>Anserineae</taxon>
        <taxon>Spinacia</taxon>
    </lineage>
</organism>
<keyword id="KW-0150">Chloroplast</keyword>
<keyword id="KW-0903">Direct protein sequencing</keyword>
<keyword id="KW-0934">Plastid</keyword>
<keyword id="KW-1185">Reference proteome</keyword>
<keyword id="KW-0793">Thylakoid</keyword>
<protein>
    <recommendedName>
        <fullName>Thylakoid lumenal 17 kDa protein</fullName>
    </recommendedName>
    <alternativeName>
        <fullName>P17</fullName>
    </alternativeName>
</protein>
<dbReference type="SMR" id="P82537"/>
<dbReference type="Proteomes" id="UP001155700">
    <property type="component" value="Unplaced"/>
</dbReference>
<dbReference type="GO" id="GO:0009543">
    <property type="term" value="C:chloroplast thylakoid lumen"/>
    <property type="evidence" value="ECO:0007669"/>
    <property type="project" value="UniProtKB-SubCell"/>
</dbReference>
<feature type="chain" id="PRO_0000072559" description="Thylakoid lumenal 17 kDa protein">
    <location>
        <begin position="1"/>
        <end position="30" status="greater than"/>
    </location>
</feature>
<feature type="non-terminal residue">
    <location>
        <position position="30"/>
    </location>
</feature>
<sequence>AESKKGFLPVIDKKDGYTFLYPFGGQEVSI</sequence>
<comment type="subcellular location">
    <subcellularLocation>
        <location>Plastid</location>
        <location>Chloroplast thylakoid lumen</location>
    </subcellularLocation>
</comment>